<proteinExistence type="inferred from homology"/>
<comment type="function">
    <text evidence="1">Negative regulator of class I heat shock genes (grpE-dnaK-dnaJ and groELS operons). Prevents heat-shock induction of these operons.</text>
</comment>
<comment type="similarity">
    <text evidence="1">Belongs to the HrcA family.</text>
</comment>
<accession>A4YJR2</accession>
<sequence>MAHHDPINLMTPPAGLAQLNERSREIFRQIVESYLATGEPVGSRNISRLIAVPLSPASVRNVMADLEQLGLIYAPHTSAGRLPTEAGLRFFVDALMQVGDMTEAERQSIQSQLAAVGRAQSVEAALDEALTRLSGLTRAAAVVLTAKSNTRLKHIEFVRLEPEQALVVLVGEDGQVENRVLTLPPGVPSSALTEASNFLNARIRGRTLAEARLELETALAQDRAELDQLTQKVIAAGVASWSGGDSDDRQLIVRGHANLLEDLHALDDLERVRRLFDDLETKRGVVDLLGRAESAEGVRIFIGSENKLFSLSGSSTIVSPYSDATGRIVGVLGVIGPTRLNYARVIPTVDYAARLLSRLMGG</sequence>
<name>HRCA_BRASO</name>
<protein>
    <recommendedName>
        <fullName evidence="1">Heat-inducible transcription repressor HrcA</fullName>
    </recommendedName>
</protein>
<gene>
    <name evidence="1" type="primary">hrcA</name>
    <name type="ordered locus">BRADO0172</name>
</gene>
<organism>
    <name type="scientific">Bradyrhizobium sp. (strain ORS 278)</name>
    <dbReference type="NCBI Taxonomy" id="114615"/>
    <lineage>
        <taxon>Bacteria</taxon>
        <taxon>Pseudomonadati</taxon>
        <taxon>Pseudomonadota</taxon>
        <taxon>Alphaproteobacteria</taxon>
        <taxon>Hyphomicrobiales</taxon>
        <taxon>Nitrobacteraceae</taxon>
        <taxon>Bradyrhizobium</taxon>
    </lineage>
</organism>
<dbReference type="EMBL" id="CU234118">
    <property type="protein sequence ID" value="CAL74138.1"/>
    <property type="molecule type" value="Genomic_DNA"/>
</dbReference>
<dbReference type="RefSeq" id="WP_011923430.1">
    <property type="nucleotide sequence ID" value="NC_009445.1"/>
</dbReference>
<dbReference type="SMR" id="A4YJR2"/>
<dbReference type="STRING" id="114615.BRADO0172"/>
<dbReference type="KEGG" id="bra:BRADO0172"/>
<dbReference type="eggNOG" id="COG1420">
    <property type="taxonomic scope" value="Bacteria"/>
</dbReference>
<dbReference type="HOGENOM" id="CLU_050019_0_0_5"/>
<dbReference type="OrthoDB" id="9783139at2"/>
<dbReference type="Proteomes" id="UP000001994">
    <property type="component" value="Chromosome"/>
</dbReference>
<dbReference type="GO" id="GO:0003677">
    <property type="term" value="F:DNA binding"/>
    <property type="evidence" value="ECO:0007669"/>
    <property type="project" value="InterPro"/>
</dbReference>
<dbReference type="GO" id="GO:0045892">
    <property type="term" value="P:negative regulation of DNA-templated transcription"/>
    <property type="evidence" value="ECO:0007669"/>
    <property type="project" value="UniProtKB-UniRule"/>
</dbReference>
<dbReference type="Gene3D" id="3.30.450.40">
    <property type="match status" value="1"/>
</dbReference>
<dbReference type="Gene3D" id="3.30.390.60">
    <property type="entry name" value="Heat-inducible transcription repressor hrca homolog, domain 3"/>
    <property type="match status" value="1"/>
</dbReference>
<dbReference type="Gene3D" id="1.10.10.10">
    <property type="entry name" value="Winged helix-like DNA-binding domain superfamily/Winged helix DNA-binding domain"/>
    <property type="match status" value="1"/>
</dbReference>
<dbReference type="HAMAP" id="MF_00081">
    <property type="entry name" value="HrcA"/>
    <property type="match status" value="1"/>
</dbReference>
<dbReference type="InterPro" id="IPR029016">
    <property type="entry name" value="GAF-like_dom_sf"/>
</dbReference>
<dbReference type="InterPro" id="IPR002571">
    <property type="entry name" value="HrcA"/>
</dbReference>
<dbReference type="InterPro" id="IPR021153">
    <property type="entry name" value="HrcA_C"/>
</dbReference>
<dbReference type="InterPro" id="IPR036388">
    <property type="entry name" value="WH-like_DNA-bd_sf"/>
</dbReference>
<dbReference type="InterPro" id="IPR036390">
    <property type="entry name" value="WH_DNA-bd_sf"/>
</dbReference>
<dbReference type="InterPro" id="IPR023120">
    <property type="entry name" value="WHTH_transcript_rep_HrcA_IDD"/>
</dbReference>
<dbReference type="NCBIfam" id="TIGR00331">
    <property type="entry name" value="hrcA"/>
    <property type="match status" value="1"/>
</dbReference>
<dbReference type="PANTHER" id="PTHR34824">
    <property type="entry name" value="HEAT-INDUCIBLE TRANSCRIPTION REPRESSOR HRCA"/>
    <property type="match status" value="1"/>
</dbReference>
<dbReference type="PANTHER" id="PTHR34824:SF1">
    <property type="entry name" value="HEAT-INDUCIBLE TRANSCRIPTION REPRESSOR HRCA"/>
    <property type="match status" value="1"/>
</dbReference>
<dbReference type="Pfam" id="PF01628">
    <property type="entry name" value="HrcA"/>
    <property type="match status" value="1"/>
</dbReference>
<dbReference type="PIRSF" id="PIRSF005485">
    <property type="entry name" value="HrcA"/>
    <property type="match status" value="1"/>
</dbReference>
<dbReference type="SUPFAM" id="SSF55781">
    <property type="entry name" value="GAF domain-like"/>
    <property type="match status" value="1"/>
</dbReference>
<dbReference type="SUPFAM" id="SSF46785">
    <property type="entry name" value="Winged helix' DNA-binding domain"/>
    <property type="match status" value="1"/>
</dbReference>
<feature type="chain" id="PRO_1000010381" description="Heat-inducible transcription repressor HrcA">
    <location>
        <begin position="1"/>
        <end position="362"/>
    </location>
</feature>
<keyword id="KW-1185">Reference proteome</keyword>
<keyword id="KW-0678">Repressor</keyword>
<keyword id="KW-0346">Stress response</keyword>
<keyword id="KW-0804">Transcription</keyword>
<keyword id="KW-0805">Transcription regulation</keyword>
<evidence type="ECO:0000255" key="1">
    <source>
        <dbReference type="HAMAP-Rule" id="MF_00081"/>
    </source>
</evidence>
<reference key="1">
    <citation type="journal article" date="2007" name="Science">
        <title>Legumes symbioses: absence of nod genes in photosynthetic bradyrhizobia.</title>
        <authorList>
            <person name="Giraud E."/>
            <person name="Moulin L."/>
            <person name="Vallenet D."/>
            <person name="Barbe V."/>
            <person name="Cytryn E."/>
            <person name="Avarre J.-C."/>
            <person name="Jaubert M."/>
            <person name="Simon D."/>
            <person name="Cartieaux F."/>
            <person name="Prin Y."/>
            <person name="Bena G."/>
            <person name="Hannibal L."/>
            <person name="Fardoux J."/>
            <person name="Kojadinovic M."/>
            <person name="Vuillet L."/>
            <person name="Lajus A."/>
            <person name="Cruveiller S."/>
            <person name="Rouy Z."/>
            <person name="Mangenot S."/>
            <person name="Segurens B."/>
            <person name="Dossat C."/>
            <person name="Franck W.L."/>
            <person name="Chang W.-S."/>
            <person name="Saunders E."/>
            <person name="Bruce D."/>
            <person name="Richardson P."/>
            <person name="Normand P."/>
            <person name="Dreyfus B."/>
            <person name="Pignol D."/>
            <person name="Stacey G."/>
            <person name="Emerich D."/>
            <person name="Vermeglio A."/>
            <person name="Medigue C."/>
            <person name="Sadowsky M."/>
        </authorList>
    </citation>
    <scope>NUCLEOTIDE SEQUENCE [LARGE SCALE GENOMIC DNA]</scope>
    <source>
        <strain>ORS 278</strain>
    </source>
</reference>